<feature type="chain" id="PRO_0000243110" description="Large ribosomal subunit protein uL22">
    <location>
        <begin position="1"/>
        <end position="110"/>
    </location>
</feature>
<name>RL22_ACIAD</name>
<gene>
    <name evidence="1" type="primary">rplV</name>
    <name type="ordered locus">ACIAD3214</name>
</gene>
<evidence type="ECO:0000255" key="1">
    <source>
        <dbReference type="HAMAP-Rule" id="MF_01331"/>
    </source>
</evidence>
<evidence type="ECO:0000305" key="2"/>
<reference key="1">
    <citation type="journal article" date="2004" name="Nucleic Acids Res.">
        <title>Unique features revealed by the genome sequence of Acinetobacter sp. ADP1, a versatile and naturally transformation competent bacterium.</title>
        <authorList>
            <person name="Barbe V."/>
            <person name="Vallenet D."/>
            <person name="Fonknechten N."/>
            <person name="Kreimeyer A."/>
            <person name="Oztas S."/>
            <person name="Labarre L."/>
            <person name="Cruveiller S."/>
            <person name="Robert C."/>
            <person name="Duprat S."/>
            <person name="Wincker P."/>
            <person name="Ornston L.N."/>
            <person name="Weissenbach J."/>
            <person name="Marliere P."/>
            <person name="Cohen G.N."/>
            <person name="Medigue C."/>
        </authorList>
    </citation>
    <scope>NUCLEOTIDE SEQUENCE [LARGE SCALE GENOMIC DNA]</scope>
    <source>
        <strain>ATCC 33305 / BD413 / ADP1</strain>
    </source>
</reference>
<protein>
    <recommendedName>
        <fullName evidence="1">Large ribosomal subunit protein uL22</fullName>
    </recommendedName>
    <alternativeName>
        <fullName evidence="2">50S ribosomal protein L22</fullName>
    </alternativeName>
</protein>
<comment type="function">
    <text evidence="1">This protein binds specifically to 23S rRNA; its binding is stimulated by other ribosomal proteins, e.g. L4, L17, and L20. It is important during the early stages of 50S assembly. It makes multiple contacts with different domains of the 23S rRNA in the assembled 50S subunit and ribosome (By similarity).</text>
</comment>
<comment type="function">
    <text evidence="1">The globular domain of the protein is located near the polypeptide exit tunnel on the outside of the subunit, while an extended beta-hairpin is found that lines the wall of the exit tunnel in the center of the 70S ribosome.</text>
</comment>
<comment type="subunit">
    <text evidence="1">Part of the 50S ribosomal subunit.</text>
</comment>
<comment type="similarity">
    <text evidence="1">Belongs to the universal ribosomal protein uL22 family.</text>
</comment>
<keyword id="KW-0687">Ribonucleoprotein</keyword>
<keyword id="KW-0689">Ribosomal protein</keyword>
<keyword id="KW-0694">RNA-binding</keyword>
<keyword id="KW-0699">rRNA-binding</keyword>
<accession>Q6F7R7</accession>
<sequence>MMEVTAKLRGAAISAQKARLVADLIRGKSVAHALNILNFSNKKAAVLVKKALESAIANAEHNNSLDVDDLKVSTIYVDEGISLKRIMPRAKGRADRITKRTCHITVKVGV</sequence>
<proteinExistence type="inferred from homology"/>
<organism>
    <name type="scientific">Acinetobacter baylyi (strain ATCC 33305 / BD413 / ADP1)</name>
    <dbReference type="NCBI Taxonomy" id="62977"/>
    <lineage>
        <taxon>Bacteria</taxon>
        <taxon>Pseudomonadati</taxon>
        <taxon>Pseudomonadota</taxon>
        <taxon>Gammaproteobacteria</taxon>
        <taxon>Moraxellales</taxon>
        <taxon>Moraxellaceae</taxon>
        <taxon>Acinetobacter</taxon>
    </lineage>
</organism>
<dbReference type="EMBL" id="CR543861">
    <property type="protein sequence ID" value="CAG69898.1"/>
    <property type="molecule type" value="Genomic_DNA"/>
</dbReference>
<dbReference type="SMR" id="Q6F7R7"/>
<dbReference type="STRING" id="202950.GCA_001485005_02941"/>
<dbReference type="KEGG" id="aci:ACIAD3214"/>
<dbReference type="eggNOG" id="COG0091">
    <property type="taxonomic scope" value="Bacteria"/>
</dbReference>
<dbReference type="HOGENOM" id="CLU_083987_3_3_6"/>
<dbReference type="Proteomes" id="UP000000430">
    <property type="component" value="Chromosome"/>
</dbReference>
<dbReference type="GO" id="GO:0022625">
    <property type="term" value="C:cytosolic large ribosomal subunit"/>
    <property type="evidence" value="ECO:0007669"/>
    <property type="project" value="TreeGrafter"/>
</dbReference>
<dbReference type="GO" id="GO:0019843">
    <property type="term" value="F:rRNA binding"/>
    <property type="evidence" value="ECO:0007669"/>
    <property type="project" value="UniProtKB-UniRule"/>
</dbReference>
<dbReference type="GO" id="GO:0003735">
    <property type="term" value="F:structural constituent of ribosome"/>
    <property type="evidence" value="ECO:0007669"/>
    <property type="project" value="InterPro"/>
</dbReference>
<dbReference type="GO" id="GO:0006412">
    <property type="term" value="P:translation"/>
    <property type="evidence" value="ECO:0007669"/>
    <property type="project" value="UniProtKB-UniRule"/>
</dbReference>
<dbReference type="CDD" id="cd00336">
    <property type="entry name" value="Ribosomal_L22"/>
    <property type="match status" value="1"/>
</dbReference>
<dbReference type="FunFam" id="3.90.470.10:FF:000001">
    <property type="entry name" value="50S ribosomal protein L22"/>
    <property type="match status" value="1"/>
</dbReference>
<dbReference type="Gene3D" id="3.90.470.10">
    <property type="entry name" value="Ribosomal protein L22/L17"/>
    <property type="match status" value="1"/>
</dbReference>
<dbReference type="HAMAP" id="MF_01331_B">
    <property type="entry name" value="Ribosomal_uL22_B"/>
    <property type="match status" value="1"/>
</dbReference>
<dbReference type="InterPro" id="IPR001063">
    <property type="entry name" value="Ribosomal_uL22"/>
</dbReference>
<dbReference type="InterPro" id="IPR005727">
    <property type="entry name" value="Ribosomal_uL22_bac/chlpt-type"/>
</dbReference>
<dbReference type="InterPro" id="IPR047867">
    <property type="entry name" value="Ribosomal_uL22_bac/org-type"/>
</dbReference>
<dbReference type="InterPro" id="IPR018260">
    <property type="entry name" value="Ribosomal_uL22_CS"/>
</dbReference>
<dbReference type="InterPro" id="IPR036394">
    <property type="entry name" value="Ribosomal_uL22_sf"/>
</dbReference>
<dbReference type="NCBIfam" id="TIGR01044">
    <property type="entry name" value="rplV_bact"/>
    <property type="match status" value="1"/>
</dbReference>
<dbReference type="PANTHER" id="PTHR13501">
    <property type="entry name" value="CHLOROPLAST 50S RIBOSOMAL PROTEIN L22-RELATED"/>
    <property type="match status" value="1"/>
</dbReference>
<dbReference type="PANTHER" id="PTHR13501:SF8">
    <property type="entry name" value="LARGE RIBOSOMAL SUBUNIT PROTEIN UL22M"/>
    <property type="match status" value="1"/>
</dbReference>
<dbReference type="Pfam" id="PF00237">
    <property type="entry name" value="Ribosomal_L22"/>
    <property type="match status" value="1"/>
</dbReference>
<dbReference type="SUPFAM" id="SSF54843">
    <property type="entry name" value="Ribosomal protein L22"/>
    <property type="match status" value="1"/>
</dbReference>
<dbReference type="PROSITE" id="PS00464">
    <property type="entry name" value="RIBOSOMAL_L22"/>
    <property type="match status" value="1"/>
</dbReference>